<keyword id="KW-0002">3D-structure</keyword>
<keyword id="KW-0174">Coenzyme M biosynthesis</keyword>
<keyword id="KW-0456">Lyase</keyword>
<keyword id="KW-1185">Reference proteome</keyword>
<evidence type="ECO:0000269" key="1">
    <source>
    </source>
</evidence>
<evidence type="ECO:0000305" key="2"/>
<evidence type="ECO:0007829" key="3">
    <source>
        <dbReference type="PDB" id="1QWG"/>
    </source>
</evidence>
<comment type="function">
    <text>Catalyzes the addition of sulfite to phosphoenolpyruvate (PEP) to yield (2R)-phospho-3-sulfolactate (PSL).</text>
</comment>
<comment type="catalytic activity">
    <reaction>
        <text>(2R)-O-phospho-3-sulfolactate = phosphoenolpyruvate + sulfite + H(+)</text>
        <dbReference type="Rhea" id="RHEA:22784"/>
        <dbReference type="ChEBI" id="CHEBI:15378"/>
        <dbReference type="ChEBI" id="CHEBI:15597"/>
        <dbReference type="ChEBI" id="CHEBI:17359"/>
        <dbReference type="ChEBI" id="CHEBI:58702"/>
        <dbReference type="EC" id="4.4.1.19"/>
    </reaction>
</comment>
<comment type="cofactor">
    <cofactor>
        <name>Mg(2+)</name>
        <dbReference type="ChEBI" id="CHEBI:18420"/>
    </cofactor>
</comment>
<comment type="biophysicochemical properties">
    <phDependence>
        <text>Optimum pH is 8.5.</text>
    </phDependence>
</comment>
<comment type="pathway">
    <text>Cofactor biosynthesis; coenzyme M biosynthesis; sulfoacetaldehyde from phosphoenolpyruvate and sulfite: step 1/4.</text>
</comment>
<comment type="subunit">
    <text evidence="2">Homotrimer.</text>
</comment>
<comment type="miscellaneous">
    <text>The enzyme is stereospecific.</text>
</comment>
<comment type="similarity">
    <text evidence="2">Belongs to the phosphosulfolactate synthase family.</text>
</comment>
<feature type="chain" id="PRO_0000080830" description="Phosphosulfolactate synthase">
    <location>
        <begin position="1"/>
        <end position="251"/>
    </location>
</feature>
<feature type="mutagenesis site" description="Loss of function." evidence="1">
    <original>K</original>
    <variation>N</variation>
    <location>
        <position position="137"/>
    </location>
</feature>
<feature type="helix" evidence="3">
    <location>
        <begin position="5"/>
        <end position="7"/>
    </location>
</feature>
<feature type="strand" evidence="3">
    <location>
        <begin position="16"/>
        <end position="22"/>
    </location>
</feature>
<feature type="helix" evidence="3">
    <location>
        <begin position="25"/>
        <end position="35"/>
    </location>
</feature>
<feature type="helix" evidence="3">
    <location>
        <begin position="36"/>
        <end position="38"/>
    </location>
</feature>
<feature type="strand" evidence="3">
    <location>
        <begin position="40"/>
        <end position="44"/>
    </location>
</feature>
<feature type="helix" evidence="3">
    <location>
        <begin position="48"/>
        <end position="51"/>
    </location>
</feature>
<feature type="helix" evidence="3">
    <location>
        <begin position="54"/>
        <end position="65"/>
    </location>
</feature>
<feature type="turn" evidence="3">
    <location>
        <begin position="66"/>
        <end position="68"/>
    </location>
</feature>
<feature type="strand" evidence="3">
    <location>
        <begin position="70"/>
        <end position="73"/>
    </location>
</feature>
<feature type="helix" evidence="3">
    <location>
        <begin position="75"/>
        <end position="83"/>
    </location>
</feature>
<feature type="helix" evidence="3">
    <location>
        <begin position="87"/>
        <end position="97"/>
    </location>
</feature>
<feature type="strand" evidence="3">
    <location>
        <begin position="101"/>
        <end position="104"/>
    </location>
</feature>
<feature type="strand" evidence="3">
    <location>
        <begin position="107"/>
        <end position="109"/>
    </location>
</feature>
<feature type="helix" evidence="3">
    <location>
        <begin position="113"/>
        <end position="125"/>
    </location>
</feature>
<feature type="strand" evidence="3">
    <location>
        <begin position="129"/>
        <end position="134"/>
    </location>
</feature>
<feature type="helix" evidence="3">
    <location>
        <begin position="139"/>
        <end position="142"/>
    </location>
</feature>
<feature type="helix" evidence="3">
    <location>
        <begin position="147"/>
        <end position="160"/>
    </location>
</feature>
<feature type="strand" evidence="3">
    <location>
        <begin position="163"/>
        <end position="167"/>
    </location>
</feature>
<feature type="turn" evidence="3">
    <location>
        <begin position="170"/>
        <end position="172"/>
    </location>
</feature>
<feature type="helix" evidence="3">
    <location>
        <begin position="187"/>
        <end position="194"/>
    </location>
</feature>
<feature type="helix" evidence="3">
    <location>
        <begin position="199"/>
        <end position="201"/>
    </location>
</feature>
<feature type="strand" evidence="3">
    <location>
        <begin position="202"/>
        <end position="205"/>
    </location>
</feature>
<feature type="helix" evidence="3">
    <location>
        <begin position="209"/>
        <end position="219"/>
    </location>
</feature>
<feature type="strand" evidence="3">
    <location>
        <begin position="225"/>
        <end position="229"/>
    </location>
</feature>
<feature type="helix" evidence="3">
    <location>
        <begin position="230"/>
        <end position="232"/>
    </location>
</feature>
<feature type="helix" evidence="3">
    <location>
        <begin position="233"/>
        <end position="241"/>
    </location>
</feature>
<feature type="helix" evidence="3">
    <location>
        <begin position="245"/>
        <end position="247"/>
    </location>
</feature>
<feature type="turn" evidence="3">
    <location>
        <begin position="248"/>
        <end position="250"/>
    </location>
</feature>
<gene>
    <name type="primary">comA</name>
    <name type="ordered locus">MJ0255</name>
</gene>
<sequence>MKAFEFLYEDFQRGLTVVLDKGLPPKFVEDYLKVCGDYIDFVKFGWGTSAVIDRDVVKEKINYYKDWGIKVYPGGTLFEYAYSKGKFDEFLNECEKLGFEAVEISDGSSDISLEERKNAIKRAKDNGFMVLTEVGKKMPDKDKQLTIDDRIKLINFDLDAGADYVIIEGRESGKGIGLFDKEGKVKENELDVLAKNVDINKVIFEAPQKSQQVAFILKFGSSVNLANIAFDEVISLETLRRGLRGDTFGKV</sequence>
<organism>
    <name type="scientific">Methanocaldococcus jannaschii (strain ATCC 43067 / DSM 2661 / JAL-1 / JCM 10045 / NBRC 100440)</name>
    <name type="common">Methanococcus jannaschii</name>
    <dbReference type="NCBI Taxonomy" id="243232"/>
    <lineage>
        <taxon>Archaea</taxon>
        <taxon>Methanobacteriati</taxon>
        <taxon>Methanobacteriota</taxon>
        <taxon>Methanomada group</taxon>
        <taxon>Methanococci</taxon>
        <taxon>Methanococcales</taxon>
        <taxon>Methanocaldococcaceae</taxon>
        <taxon>Methanocaldococcus</taxon>
    </lineage>
</organism>
<protein>
    <recommendedName>
        <fullName>Phosphosulfolactate synthase</fullName>
        <ecNumber>4.4.1.19</ecNumber>
    </recommendedName>
    <alternativeName>
        <fullName>(2R)-phospho-3-sulfolactate synthase</fullName>
        <shortName>PSL synthase</shortName>
    </alternativeName>
</protein>
<proteinExistence type="evidence at protein level"/>
<reference key="1">
    <citation type="journal article" date="1996" name="Science">
        <title>Complete genome sequence of the methanogenic archaeon, Methanococcus jannaschii.</title>
        <authorList>
            <person name="Bult C.J."/>
            <person name="White O."/>
            <person name="Olsen G.J."/>
            <person name="Zhou L."/>
            <person name="Fleischmann R.D."/>
            <person name="Sutton G.G."/>
            <person name="Blake J.A."/>
            <person name="FitzGerald L.M."/>
            <person name="Clayton R.A."/>
            <person name="Gocayne J.D."/>
            <person name="Kerlavage A.R."/>
            <person name="Dougherty B.A."/>
            <person name="Tomb J.-F."/>
            <person name="Adams M.D."/>
            <person name="Reich C.I."/>
            <person name="Overbeek R."/>
            <person name="Kirkness E.F."/>
            <person name="Weinstock K.G."/>
            <person name="Merrick J.M."/>
            <person name="Glodek A."/>
            <person name="Scott J.L."/>
            <person name="Geoghagen N.S.M."/>
            <person name="Weidman J.F."/>
            <person name="Fuhrmann J.L."/>
            <person name="Nguyen D."/>
            <person name="Utterback T.R."/>
            <person name="Kelley J.M."/>
            <person name="Peterson J.D."/>
            <person name="Sadow P.W."/>
            <person name="Hanna M.C."/>
            <person name="Cotton M.D."/>
            <person name="Roberts K.M."/>
            <person name="Hurst M.A."/>
            <person name="Kaine B.P."/>
            <person name="Borodovsky M."/>
            <person name="Klenk H.-P."/>
            <person name="Fraser C.M."/>
            <person name="Smith H.O."/>
            <person name="Woese C.R."/>
            <person name="Venter J.C."/>
        </authorList>
    </citation>
    <scope>NUCLEOTIDE SEQUENCE [LARGE SCALE GENOMIC DNA]</scope>
    <source>
        <strain>ATCC 43067 / DSM 2661 / JAL-1 / JCM 10045 / NBRC 100440</strain>
    </source>
</reference>
<reference key="2">
    <citation type="journal article" date="2002" name="J. Biol. Chem.">
        <title>Identification of coenzyme M biosynthetic phosphosulfolactate synthase: a new family of sulfonate-biosynthesizing enzymes.</title>
        <authorList>
            <person name="Graham D.E."/>
            <person name="Xu H."/>
            <person name="White R.H."/>
        </authorList>
    </citation>
    <scope>CHARACTERIZATION</scope>
    <scope>MUTAGENESIS OF LYS-137</scope>
    <source>
        <strain>ATCC 43067 / DSM 2661 / JAL-1 / JCM 10045 / NBRC 100440</strain>
    </source>
</reference>
<dbReference type="EC" id="4.4.1.19"/>
<dbReference type="EMBL" id="L77117">
    <property type="protein sequence ID" value="AAB98242.1"/>
    <property type="molecule type" value="Genomic_DNA"/>
</dbReference>
<dbReference type="PIR" id="H64331">
    <property type="entry name" value="H64331"/>
</dbReference>
<dbReference type="RefSeq" id="WP_010869753.1">
    <property type="nucleotide sequence ID" value="NC_000909.1"/>
</dbReference>
<dbReference type="PDB" id="1QWG">
    <property type="method" value="X-ray"/>
    <property type="resolution" value="1.60 A"/>
    <property type="chains" value="A=1-251"/>
</dbReference>
<dbReference type="PDBsum" id="1QWG"/>
<dbReference type="SMR" id="Q57703"/>
<dbReference type="FunCoup" id="Q57703">
    <property type="interactions" value="110"/>
</dbReference>
<dbReference type="STRING" id="243232.MJ_0255"/>
<dbReference type="PaxDb" id="243232-MJ_0255"/>
<dbReference type="EnsemblBacteria" id="AAB98242">
    <property type="protein sequence ID" value="AAB98242"/>
    <property type="gene ID" value="MJ_0255"/>
</dbReference>
<dbReference type="GeneID" id="1451109"/>
<dbReference type="KEGG" id="mja:MJ_0255"/>
<dbReference type="eggNOG" id="arCOG04896">
    <property type="taxonomic scope" value="Archaea"/>
</dbReference>
<dbReference type="HOGENOM" id="CLU_062679_2_0_2"/>
<dbReference type="InParanoid" id="Q57703"/>
<dbReference type="OrthoDB" id="6405at2157"/>
<dbReference type="PhylomeDB" id="Q57703"/>
<dbReference type="BioCyc" id="MetaCyc:MONOMER-2262"/>
<dbReference type="BRENDA" id="4.4.1.19">
    <property type="organism ID" value="3260"/>
</dbReference>
<dbReference type="SABIO-RK" id="Q57703"/>
<dbReference type="UniPathway" id="UPA00355">
    <property type="reaction ID" value="UER00469"/>
</dbReference>
<dbReference type="EvolutionaryTrace" id="Q57703"/>
<dbReference type="Proteomes" id="UP000000805">
    <property type="component" value="Chromosome"/>
</dbReference>
<dbReference type="GO" id="GO:0043817">
    <property type="term" value="F:phosphosulfolactate synthase activity"/>
    <property type="evidence" value="ECO:0007669"/>
    <property type="project" value="UniProtKB-EC"/>
</dbReference>
<dbReference type="GO" id="GO:0050545">
    <property type="term" value="F:sulfopyruvate decarboxylase activity"/>
    <property type="evidence" value="ECO:0000314"/>
    <property type="project" value="MENGO"/>
</dbReference>
<dbReference type="GO" id="GO:0019295">
    <property type="term" value="P:coenzyme M biosynthetic process"/>
    <property type="evidence" value="ECO:0007669"/>
    <property type="project" value="UniProtKB-UniPathway"/>
</dbReference>
<dbReference type="Gene3D" id="3.20.20.70">
    <property type="entry name" value="Aldolase class I"/>
    <property type="match status" value="1"/>
</dbReference>
<dbReference type="InterPro" id="IPR013785">
    <property type="entry name" value="Aldolase_TIM"/>
</dbReference>
<dbReference type="InterPro" id="IPR022370">
    <property type="entry name" value="Arch_ComA"/>
</dbReference>
<dbReference type="InterPro" id="IPR003830">
    <property type="entry name" value="ComA_synth"/>
</dbReference>
<dbReference type="InterPro" id="IPR036112">
    <property type="entry name" value="ComA_synth_sf"/>
</dbReference>
<dbReference type="NCBIfam" id="TIGR03849">
    <property type="entry name" value="arch_ComA"/>
    <property type="match status" value="1"/>
</dbReference>
<dbReference type="PANTHER" id="PTHR48413">
    <property type="match status" value="1"/>
</dbReference>
<dbReference type="PANTHER" id="PTHR48413:SF1">
    <property type="entry name" value="PROTEIN HEAT-STRESS-ASSOCIATED 32"/>
    <property type="match status" value="1"/>
</dbReference>
<dbReference type="Pfam" id="PF02679">
    <property type="entry name" value="ComA"/>
    <property type="match status" value="1"/>
</dbReference>
<dbReference type="SUPFAM" id="SSF102110">
    <property type="entry name" value="(2r)-phospho-3-sulfolactate synthase ComA"/>
    <property type="match status" value="1"/>
</dbReference>
<name>PSLS_METJA</name>
<accession>Q57703</accession>